<proteinExistence type="inferred from homology"/>
<dbReference type="EMBL" id="Z48621">
    <property type="protein sequence ID" value="CAA88542.1"/>
    <property type="molecule type" value="Genomic_DNA"/>
</dbReference>
<dbReference type="PIR" id="T23995">
    <property type="entry name" value="T23995"/>
</dbReference>
<dbReference type="RefSeq" id="NP_001361817.1">
    <property type="nucleotide sequence ID" value="NM_001375105.2"/>
</dbReference>
<dbReference type="RefSeq" id="NP_509653.1">
    <property type="nucleotide sequence ID" value="NM_077252.1"/>
</dbReference>
<dbReference type="FunCoup" id="Q09419">
    <property type="interactions" value="199"/>
</dbReference>
<dbReference type="STRING" id="6239.R07B1.5.1"/>
<dbReference type="PaxDb" id="6239-R07B1.5"/>
<dbReference type="EnsemblMetazoa" id="R07B1.5.1">
    <property type="protein sequence ID" value="R07B1.5.1"/>
    <property type="gene ID" value="WBGene00011077"/>
</dbReference>
<dbReference type="EnsemblMetazoa" id="R07B1.5.2">
    <property type="protein sequence ID" value="R07B1.5.2"/>
    <property type="gene ID" value="WBGene00011077"/>
</dbReference>
<dbReference type="EnsemblMetazoa" id="R07B1.5.3">
    <property type="protein sequence ID" value="R07B1.5.3"/>
    <property type="gene ID" value="WBGene00011077"/>
</dbReference>
<dbReference type="GeneID" id="187646"/>
<dbReference type="UCSC" id="R07B1.5">
    <property type="organism name" value="c. elegans"/>
</dbReference>
<dbReference type="AGR" id="WB:WBGene00011077"/>
<dbReference type="WormBase" id="R07B1.5">
    <property type="protein sequence ID" value="CE01631"/>
    <property type="gene ID" value="WBGene00011077"/>
</dbReference>
<dbReference type="eggNOG" id="ENOG502THZJ">
    <property type="taxonomic scope" value="Eukaryota"/>
</dbReference>
<dbReference type="GeneTree" id="ENSGT00970000196819"/>
<dbReference type="HOGENOM" id="CLU_138748_0_0_1"/>
<dbReference type="InParanoid" id="Q09419"/>
<dbReference type="OMA" id="VVMNCVD"/>
<dbReference type="OrthoDB" id="5857129at2759"/>
<dbReference type="PhylomeDB" id="Q09419"/>
<dbReference type="PRO" id="PR:Q09419"/>
<dbReference type="Proteomes" id="UP000001940">
    <property type="component" value="Chromosome X"/>
</dbReference>
<dbReference type="Bgee" id="WBGene00011077">
    <property type="expression patterns" value="Expressed in pharyngeal muscle cell (C elegans) and 2 other cell types or tissues"/>
</dbReference>
<dbReference type="InterPro" id="IPR002601">
    <property type="entry name" value="C6_domain"/>
</dbReference>
<dbReference type="PANTHER" id="PTHR21629">
    <property type="entry name" value="C6 DOMAIN-CONTAINING PROTEIN"/>
    <property type="match status" value="1"/>
</dbReference>
<dbReference type="PANTHER" id="PTHR21629:SF10">
    <property type="entry name" value="C6 DOMAIN-CONTAINING PROTEIN"/>
    <property type="match status" value="1"/>
</dbReference>
<dbReference type="Pfam" id="PF01681">
    <property type="entry name" value="C6"/>
    <property type="match status" value="1"/>
</dbReference>
<dbReference type="SMART" id="SM01048">
    <property type="entry name" value="C6"/>
    <property type="match status" value="1"/>
</dbReference>
<keyword id="KW-1185">Reference proteome</keyword>
<keyword id="KW-0732">Signal</keyword>
<sequence>MELLSLAILSSFFAVANQCAATSPVTSPTTTTTEASVTTTIATSTSTTTVTTTTTVVTAACATCTTAQIGIITGNDGDMTPTSAITTDASGCSVITYTCERTPNVETDIVLITFYSDSQTPTDVGTENGVGTANVVMNCVNGEWVKDGIVINDVECQIIT</sequence>
<feature type="signal peptide" evidence="1">
    <location>
        <begin position="1"/>
        <end position="18"/>
    </location>
</feature>
<feature type="chain" id="PRO_0000014296" description="Uncharacterized protein R07B1.5">
    <location>
        <begin position="19"/>
        <end position="160"/>
    </location>
</feature>
<accession>Q09419</accession>
<protein>
    <recommendedName>
        <fullName>Uncharacterized protein R07B1.5</fullName>
    </recommendedName>
</protein>
<reference key="1">
    <citation type="journal article" date="1998" name="Science">
        <title>Genome sequence of the nematode C. elegans: a platform for investigating biology.</title>
        <authorList>
            <consortium name="The C. elegans sequencing consortium"/>
        </authorList>
    </citation>
    <scope>NUCLEOTIDE SEQUENCE [LARGE SCALE GENOMIC DNA]</scope>
    <source>
        <strain>Bristol N2</strain>
    </source>
</reference>
<gene>
    <name type="ORF">R07B1.5</name>
</gene>
<evidence type="ECO:0000255" key="1"/>
<organism>
    <name type="scientific">Caenorhabditis elegans</name>
    <dbReference type="NCBI Taxonomy" id="6239"/>
    <lineage>
        <taxon>Eukaryota</taxon>
        <taxon>Metazoa</taxon>
        <taxon>Ecdysozoa</taxon>
        <taxon>Nematoda</taxon>
        <taxon>Chromadorea</taxon>
        <taxon>Rhabditida</taxon>
        <taxon>Rhabditina</taxon>
        <taxon>Rhabditomorpha</taxon>
        <taxon>Rhabditoidea</taxon>
        <taxon>Rhabditidae</taxon>
        <taxon>Peloderinae</taxon>
        <taxon>Caenorhabditis</taxon>
    </lineage>
</organism>
<name>YRN5_CAEEL</name>